<accession>E1WAC5</accession>
<accession>Q56035</accession>
<keyword id="KW-0963">Cytoplasm</keyword>
<keyword id="KW-0596">Phosphopantetheine</keyword>
<keyword id="KW-0597">Phosphoprotein</keyword>
<comment type="function">
    <text evidence="1">Acyl carrier protein.</text>
</comment>
<comment type="subcellular location">
    <subcellularLocation>
        <location evidence="1">Cytoplasm</location>
    </subcellularLocation>
</comment>
<comment type="PTM">
    <text evidence="1">4'-phosphopantetheine is transferred from CoA to a specific serine of apo-IacP.</text>
</comment>
<dbReference type="EMBL" id="U40013">
    <property type="protein sequence ID" value="AAA86619.1"/>
    <property type="molecule type" value="Genomic_DNA"/>
</dbReference>
<dbReference type="EMBL" id="FQ312003">
    <property type="protein sequence ID" value="CBW18958.1"/>
    <property type="molecule type" value="Genomic_DNA"/>
</dbReference>
<dbReference type="RefSeq" id="WP_001055577.1">
    <property type="nucleotide sequence ID" value="NZ_QASL01000017.1"/>
</dbReference>
<dbReference type="SMR" id="E1WAC5"/>
<dbReference type="KEGG" id="sey:SL1344_2860"/>
<dbReference type="PATRIC" id="fig|216597.6.peg.3182"/>
<dbReference type="HOGENOM" id="CLU_108696_5_4_6"/>
<dbReference type="BioCyc" id="SENT216597:SL1344_RS14915-MONOMER"/>
<dbReference type="Proteomes" id="UP000008962">
    <property type="component" value="Chromosome"/>
</dbReference>
<dbReference type="GO" id="GO:0005829">
    <property type="term" value="C:cytosol"/>
    <property type="evidence" value="ECO:0007669"/>
    <property type="project" value="TreeGrafter"/>
</dbReference>
<dbReference type="GO" id="GO:0016020">
    <property type="term" value="C:membrane"/>
    <property type="evidence" value="ECO:0007669"/>
    <property type="project" value="GOC"/>
</dbReference>
<dbReference type="GO" id="GO:0000035">
    <property type="term" value="F:acyl binding"/>
    <property type="evidence" value="ECO:0007669"/>
    <property type="project" value="TreeGrafter"/>
</dbReference>
<dbReference type="GO" id="GO:0000036">
    <property type="term" value="F:acyl carrier activity"/>
    <property type="evidence" value="ECO:0007669"/>
    <property type="project" value="TreeGrafter"/>
</dbReference>
<dbReference type="GO" id="GO:0009245">
    <property type="term" value="P:lipid A biosynthetic process"/>
    <property type="evidence" value="ECO:0007669"/>
    <property type="project" value="TreeGrafter"/>
</dbReference>
<dbReference type="Gene3D" id="1.10.1200.10">
    <property type="entry name" value="ACP-like"/>
    <property type="match status" value="1"/>
</dbReference>
<dbReference type="InterPro" id="IPR003231">
    <property type="entry name" value="ACP"/>
</dbReference>
<dbReference type="InterPro" id="IPR036736">
    <property type="entry name" value="ACP-like_sf"/>
</dbReference>
<dbReference type="InterPro" id="IPR009081">
    <property type="entry name" value="PP-bd_ACP"/>
</dbReference>
<dbReference type="NCBIfam" id="NF006031">
    <property type="entry name" value="PRK08172.1"/>
    <property type="match status" value="1"/>
</dbReference>
<dbReference type="PANTHER" id="PTHR20863">
    <property type="entry name" value="ACYL CARRIER PROTEIN"/>
    <property type="match status" value="1"/>
</dbReference>
<dbReference type="PANTHER" id="PTHR20863:SF76">
    <property type="entry name" value="CARRIER DOMAIN-CONTAINING PROTEIN"/>
    <property type="match status" value="1"/>
</dbReference>
<dbReference type="Pfam" id="PF00550">
    <property type="entry name" value="PP-binding"/>
    <property type="match status" value="1"/>
</dbReference>
<dbReference type="SUPFAM" id="SSF47336">
    <property type="entry name" value="ACP-like"/>
    <property type="match status" value="1"/>
</dbReference>
<dbReference type="PROSITE" id="PS50075">
    <property type="entry name" value="CARRIER"/>
    <property type="match status" value="1"/>
</dbReference>
<organism>
    <name type="scientific">Salmonella typhimurium (strain SL1344)</name>
    <dbReference type="NCBI Taxonomy" id="216597"/>
    <lineage>
        <taxon>Bacteria</taxon>
        <taxon>Pseudomonadati</taxon>
        <taxon>Pseudomonadota</taxon>
        <taxon>Gammaproteobacteria</taxon>
        <taxon>Enterobacterales</taxon>
        <taxon>Enterobacteriaceae</taxon>
        <taxon>Salmonella</taxon>
    </lineage>
</organism>
<sequence length="82" mass="9199">MNMDIEARVKKVITSCIAVDVDSINGQTHLVEDLYADSLDLIDIVFGLSEEFDISCNENDLPDMMTFADICRVVKKSLESRV</sequence>
<proteinExistence type="inferred from homology"/>
<evidence type="ECO:0000250" key="1"/>
<evidence type="ECO:0000255" key="2">
    <source>
        <dbReference type="PROSITE-ProRule" id="PRU00258"/>
    </source>
</evidence>
<reference key="1">
    <citation type="journal article" date="1995" name="J. Bacteriol.">
        <title>Identification of two targets of the type III protein secretion system encoded by the inv and spa loci of Salmonella typhimurium that have homology to the Shigella IpaD and IpaA proteins.</title>
        <authorList>
            <person name="Kaniga K."/>
            <person name="Trollinger D."/>
            <person name="Galan J.E."/>
        </authorList>
    </citation>
    <scope>NUCLEOTIDE SEQUENCE [GENOMIC DNA]</scope>
    <source>
        <strain>SL1344</strain>
    </source>
</reference>
<reference key="2">
    <citation type="journal article" date="2012" name="Proc. Natl. Acad. Sci. U.S.A.">
        <title>The transcriptional landscape and small RNAs of Salmonella enterica serovar Typhimurium.</title>
        <authorList>
            <person name="Kroger C."/>
            <person name="Dillon S.C."/>
            <person name="Cameron A.D."/>
            <person name="Papenfort K."/>
            <person name="Sivasankaran S.K."/>
            <person name="Hokamp K."/>
            <person name="Chao Y."/>
            <person name="Sittka A."/>
            <person name="Hebrard M."/>
            <person name="Handler K."/>
            <person name="Colgan A."/>
            <person name="Leekitcharoenphon P."/>
            <person name="Langridge G.C."/>
            <person name="Lohan A.J."/>
            <person name="Loftus B."/>
            <person name="Lucchini S."/>
            <person name="Ussery D.W."/>
            <person name="Dorman C.J."/>
            <person name="Thomson N.R."/>
            <person name="Vogel J."/>
            <person name="Hinton J.C."/>
        </authorList>
    </citation>
    <scope>NUCLEOTIDE SEQUENCE [LARGE SCALE GENOMIC DNA]</scope>
    <source>
        <strain>SL1344</strain>
    </source>
</reference>
<name>IACP_SALTS</name>
<protein>
    <recommendedName>
        <fullName>Probable acyl carrier protein IacP</fullName>
        <shortName>ACP</shortName>
    </recommendedName>
</protein>
<feature type="chain" id="PRO_0000405411" description="Probable acyl carrier protein IacP">
    <location>
        <begin position="1"/>
        <end position="82"/>
    </location>
</feature>
<feature type="domain" description="Carrier" evidence="2">
    <location>
        <begin position="3"/>
        <end position="78"/>
    </location>
</feature>
<feature type="modified residue" description="O-(pantetheine 4'-phosphoryl)serine" evidence="2">
    <location>
        <position position="38"/>
    </location>
</feature>
<gene>
    <name type="primary">iacP</name>
    <name type="synonym">sipF</name>
    <name type="ordered locus">SL1344_2860</name>
</gene>